<comment type="function">
    <text evidence="1 3">Transcriptional activator of immediate-early (IE) gene products (alpha genes). Acts as a key activator of lytic infection by initiating the lytic program through the assembly of the transcriptional regulatory VP16-induced complex composed of VP16 and two cellular factors, HCFC1 and POU2F 1. VP16-induced complex represents a regulatory switch: when it is on, it promotes IE-gene expression and thus lytic infection, and when it is off, it limits IE-gene transcription favoring latent infection (By similarity).</text>
</comment>
<comment type="function">
    <text evidence="6">May play a role in the aggregation of tegument proteins around nucleocapsids during virus morphogenesis.</text>
</comment>
<comment type="subunit">
    <text evidence="1">Interacts with VP22. Interacts with gH (via C-terminus). Interacts with the virion host shutoff protein (vhs). Interacts with VP11/12. Associates with the VP16-induced complex; binding to host HCFC1 activates VP16 for association with the octamer motif-binding host protein POU2F1, to form a multiprotein-DNA complex responsible for activating transcription of the viral immediate early genes (By similarity).</text>
</comment>
<comment type="subcellular location">
    <subcellularLocation>
        <location evidence="4 5">Virion tegument</location>
    </subcellularLocation>
    <subcellularLocation>
        <location evidence="4 5">Host nucleus</location>
    </subcellularLocation>
</comment>
<comment type="domain">
    <text evidence="1">The transcriptional activation region seems to target many proteins of the RNA polymerase II transcription machinery.</text>
</comment>
<comment type="similarity">
    <text evidence="6">Belongs to the herpesviridae tegument protein VP16 protein family.</text>
</comment>
<comment type="sequence caution" evidence="6">
    <conflict type="erroneous initiation">
        <sequence resource="EMBL-CDS" id="AAA45766"/>
    </conflict>
</comment>
<sequence>MDLLVDELFADMDADGASPPPPRPAGGPKNTPAAPPLYATGRLSQAQLMPSPPMPVPPAALFNRLLDDLGFSAGPALCTMLDTWNEDLFSALPTNADLYRECKFLSTLPSDVVEWGDAYVPERAQIDIRAHGDVAFPTLPATRDGLGLYYEALSRFFHAELRAREESYRTVLANFCSALYRYLRASVRQLHRQAHMRGRDRDLGEMLRATIADRYYRETARLARVLFLHLYLFLTREILWAAYAEQMMRPDLFDCLCCDLESWRQLAGLFQPFMFVNGALTVRGVPIEARRLRELNHIREHLNLPLVRSAATEEPGAPLTTPPTLHGNQARASGYFMVLIRAKLDSYSSFTTSPSEAVMREHAYSRARTKNNYGSTIEGLLDLPDDDAPEEAGLAAPRLSFLPAGHTRRLSTAPPTDVSLGDELHLDGEDVAMAHADALDDFDLDMLGDGDSPGPGFTPHDSAPYGALDMADFEFEQMFTDALGIDEYGG</sequence>
<feature type="chain" id="PRO_0000115799" description="Tegument protein VP16">
    <location>
        <begin position="1"/>
        <end position="490"/>
    </location>
</feature>
<feature type="region of interest" description="Disordered" evidence="2">
    <location>
        <begin position="12"/>
        <end position="37"/>
    </location>
</feature>
<feature type="region of interest" description="Transcriptional activation" evidence="1">
    <location>
        <begin position="411"/>
        <end position="490"/>
    </location>
</feature>
<feature type="site" description="Critical role in activation" evidence="1">
    <location>
        <position position="442"/>
    </location>
</feature>
<feature type="modified residue" description="Phosphoserine" evidence="1">
    <location>
        <position position="18"/>
    </location>
</feature>
<feature type="modified residue" description="Phosphoserine" evidence="1">
    <location>
        <position position="353"/>
    </location>
</feature>
<feature type="modified residue" description="Phosphoserine" evidence="1">
    <location>
        <position position="411"/>
    </location>
</feature>
<feature type="modified residue" description="Phosphoserine" evidence="1">
    <location>
        <position position="452"/>
    </location>
</feature>
<feature type="helix" evidence="7">
    <location>
        <begin position="471"/>
        <end position="477"/>
    </location>
</feature>
<name>VP16_HHV1F</name>
<organismHost>
    <name type="scientific">Homo sapiens</name>
    <name type="common">Human</name>
    <dbReference type="NCBI Taxonomy" id="9606"/>
</organismHost>
<protein>
    <recommendedName>
        <fullName>Tegument protein VP16</fullName>
    </recommendedName>
    <alternativeName>
        <fullName>Alpha trans-inducing protein</fullName>
    </alternativeName>
    <alternativeName>
        <fullName>Alpha-TIF</fullName>
    </alternativeName>
    <alternativeName>
        <fullName>ICP25</fullName>
    </alternativeName>
    <alternativeName>
        <fullName>Vmw65</fullName>
    </alternativeName>
</protein>
<evidence type="ECO:0000250" key="1"/>
<evidence type="ECO:0000256" key="2">
    <source>
        <dbReference type="SAM" id="MobiDB-lite"/>
    </source>
</evidence>
<evidence type="ECO:0000269" key="3">
    <source>
    </source>
</evidence>
<evidence type="ECO:0000269" key="4">
    <source>
    </source>
</evidence>
<evidence type="ECO:0000269" key="5">
    <source>
    </source>
</evidence>
<evidence type="ECO:0000305" key="6"/>
<evidence type="ECO:0007829" key="7">
    <source>
        <dbReference type="PDB" id="2K2U"/>
    </source>
</evidence>
<organism>
    <name type="scientific">Human herpesvirus 1 (strain F)</name>
    <name type="common">HHV-1</name>
    <name type="synonym">Human herpes simplex virus 1</name>
    <dbReference type="NCBI Taxonomy" id="10304"/>
    <lineage>
        <taxon>Viruses</taxon>
        <taxon>Duplodnaviria</taxon>
        <taxon>Heunggongvirae</taxon>
        <taxon>Peploviricota</taxon>
        <taxon>Herviviricetes</taxon>
        <taxon>Herpesvirales</taxon>
        <taxon>Orthoherpesviridae</taxon>
        <taxon>Alphaherpesvirinae</taxon>
        <taxon>Simplexvirus</taxon>
        <taxon>Simplexvirus humanalpha1</taxon>
        <taxon>Human herpesvirus 1</taxon>
    </lineage>
</organism>
<dbReference type="EMBL" id="K03350">
    <property type="protein sequence ID" value="AAA45766.1"/>
    <property type="status" value="ALT_INIT"/>
    <property type="molecule type" value="Genomic_DNA"/>
</dbReference>
<dbReference type="PIR" id="A03727">
    <property type="entry name" value="IXBE1F"/>
</dbReference>
<dbReference type="PDB" id="2K2U">
    <property type="method" value="NMR"/>
    <property type="chains" value="B=456-490"/>
</dbReference>
<dbReference type="PDBsum" id="2K2U"/>
<dbReference type="BMRB" id="P04486"/>
<dbReference type="SMR" id="P04486"/>
<dbReference type="EvolutionaryTrace" id="P04486"/>
<dbReference type="GO" id="GO:0042025">
    <property type="term" value="C:host cell nucleus"/>
    <property type="evidence" value="ECO:0007669"/>
    <property type="project" value="UniProtKB-SubCell"/>
</dbReference>
<dbReference type="GO" id="GO:0019033">
    <property type="term" value="C:viral tegument"/>
    <property type="evidence" value="ECO:0007669"/>
    <property type="project" value="UniProtKB-SubCell"/>
</dbReference>
<dbReference type="GO" id="GO:0003677">
    <property type="term" value="F:DNA binding"/>
    <property type="evidence" value="ECO:0007669"/>
    <property type="project" value="UniProtKB-KW"/>
</dbReference>
<dbReference type="GO" id="GO:0060090">
    <property type="term" value="F:molecular adaptor activity"/>
    <property type="evidence" value="ECO:0000269"/>
    <property type="project" value="DisProt"/>
</dbReference>
<dbReference type="GO" id="GO:0140677">
    <property type="term" value="F:molecular function activator activity"/>
    <property type="evidence" value="ECO:0000353"/>
    <property type="project" value="DisProt"/>
</dbReference>
<dbReference type="GO" id="GO:0039695">
    <property type="term" value="P:DNA-templated viral transcription"/>
    <property type="evidence" value="ECO:0000250"/>
    <property type="project" value="UniProtKB"/>
</dbReference>
<dbReference type="GO" id="GO:0006355">
    <property type="term" value="P:regulation of DNA-templated transcription"/>
    <property type="evidence" value="ECO:0007669"/>
    <property type="project" value="InterPro"/>
</dbReference>
<dbReference type="DisProt" id="DP02291"/>
<dbReference type="FunFam" id="1.10.1290.10:FF:000001">
    <property type="entry name" value="Tegument protein VP16"/>
    <property type="match status" value="1"/>
</dbReference>
<dbReference type="Gene3D" id="1.10.1290.10">
    <property type="entry name" value="Alpha trans-inducing (Alpha-TIF)"/>
    <property type="match status" value="1"/>
</dbReference>
<dbReference type="IDEAL" id="IID90006"/>
<dbReference type="InterPro" id="IPR003174">
    <property type="entry name" value="Alpha_TIF"/>
</dbReference>
<dbReference type="InterPro" id="IPR036538">
    <property type="entry name" value="Alpha_TIF_sf"/>
</dbReference>
<dbReference type="InterPro" id="IPR021051">
    <property type="entry name" value="HSV_VP16_C"/>
</dbReference>
<dbReference type="Pfam" id="PF02232">
    <property type="entry name" value="Alpha_TIF"/>
    <property type="match status" value="1"/>
</dbReference>
<dbReference type="Pfam" id="PF12149">
    <property type="entry name" value="HSV_VP16_C"/>
    <property type="match status" value="1"/>
</dbReference>
<dbReference type="SMART" id="SM00814">
    <property type="entry name" value="Alpha_TIF"/>
    <property type="match status" value="1"/>
</dbReference>
<dbReference type="SUPFAM" id="SSF56548">
    <property type="entry name" value="Conserved core of transcriptional regulatory protein vp16"/>
    <property type="match status" value="1"/>
</dbReference>
<gene>
    <name type="ORF">UL48</name>
</gene>
<proteinExistence type="evidence at protein level"/>
<reference key="1">
    <citation type="journal article" date="1985" name="Proc. Natl. Acad. Sci. U.S.A.">
        <title>Nucleotide sequence and predicted amino acid sequence of a protein encoded in a small herpes simplex virus DNA fragment capable of trans-inducing alpha genes.</title>
        <authorList>
            <person name="Pellett P.E."/>
            <person name="McKnight J.L.C."/>
            <person name="Jenkins F.J."/>
            <person name="Roizman B."/>
        </authorList>
    </citation>
    <scope>NUCLEOTIDE SEQUENCE [GENOMIC DNA]</scope>
</reference>
<reference key="2">
    <citation type="journal article" date="2005" name="J. Biol. Chem.">
        <title>Combinatorial transcription of herpes simplex virus and varicella zoster virus immediate early genes is strictly determined by the cellular coactivator HCF-1.</title>
        <authorList>
            <person name="Narayanan A."/>
            <person name="Nogueira M.L."/>
            <person name="Ruyechan W.T."/>
            <person name="Kristie T.M."/>
        </authorList>
    </citation>
    <scope>FUNCTION</scope>
    <scope>INTERACTION WITH HUMAN HCFC1</scope>
</reference>
<reference key="3">
    <citation type="journal article" date="2005" name="J. Virol.">
        <title>Nuclear localizations of the herpes simplex virus type 1 tegument proteins VP13/14, vhs, and VP16 precede VP22-dependent microtubule reorganization and VP22 nuclear import.</title>
        <authorList>
            <person name="Yedowitz J.C."/>
            <person name="Kotsakis A."/>
            <person name="Schlegel E.F."/>
            <person name="Blaho J.A."/>
        </authorList>
    </citation>
    <scope>SUBCELLULAR LOCATION</scope>
</reference>
<reference key="4">
    <citation type="journal article" date="2008" name="J. Virol.">
        <title>Comprehensive characterization of extracellular herpes simplex virus type 1 virions.</title>
        <authorList>
            <person name="Loret S."/>
            <person name="Guay G."/>
            <person name="Lippe R."/>
        </authorList>
    </citation>
    <scope>SUBCELLULAR LOCATION</scope>
</reference>
<reference key="5">
    <citation type="journal article" date="2008" name="J. Am. Chem. Soc.">
        <title>NMR structure of the complex between the Tfb1 subunit of TFIIH and the activation domain of VP16: structural similarities between VP16 and p53.</title>
        <authorList>
            <person name="Langlois C."/>
            <person name="Mas C."/>
            <person name="Di Lello P."/>
            <person name="Jenkins L.M."/>
            <person name="Legault P."/>
            <person name="Omichinski J.G."/>
        </authorList>
    </citation>
    <scope>STRUCTURE BY NMR OF 445-479 IN COMPLEX WITH THE TFB1 SUBUNIT OF TFIIH</scope>
</reference>
<accession>P04486</accession>
<keyword id="KW-0002">3D-structure</keyword>
<keyword id="KW-0238">DNA-binding</keyword>
<keyword id="KW-1048">Host nucleus</keyword>
<keyword id="KW-0945">Host-virus interaction</keyword>
<keyword id="KW-0597">Phosphoprotein</keyword>
<keyword id="KW-0804">Transcription</keyword>
<keyword id="KW-0805">Transcription regulation</keyword>
<keyword id="KW-0946">Virion</keyword>
<keyword id="KW-0920">Virion tegument</keyword>